<protein>
    <recommendedName>
        <fullName evidence="1">UDP-N-acetylmuramate--L-alanine ligase</fullName>
        <ecNumber evidence="1">6.3.2.8</ecNumber>
    </recommendedName>
    <alternativeName>
        <fullName evidence="1">UDP-N-acetylmuramoyl-L-alanine synthetase</fullName>
    </alternativeName>
</protein>
<evidence type="ECO:0000255" key="1">
    <source>
        <dbReference type="HAMAP-Rule" id="MF_00046"/>
    </source>
</evidence>
<accession>Q604V8</accession>
<gene>
    <name evidence="1" type="primary">murC</name>
    <name type="ordered locus">MCA2428</name>
</gene>
<dbReference type="EC" id="6.3.2.8" evidence="1"/>
<dbReference type="EMBL" id="AE017282">
    <property type="protein sequence ID" value="AAU91480.1"/>
    <property type="molecule type" value="Genomic_DNA"/>
</dbReference>
<dbReference type="RefSeq" id="WP_010961653.1">
    <property type="nucleotide sequence ID" value="NC_002977.6"/>
</dbReference>
<dbReference type="SMR" id="Q604V8"/>
<dbReference type="STRING" id="243233.MCA2428"/>
<dbReference type="GeneID" id="88224629"/>
<dbReference type="KEGG" id="mca:MCA2428"/>
<dbReference type="eggNOG" id="COG0773">
    <property type="taxonomic scope" value="Bacteria"/>
</dbReference>
<dbReference type="HOGENOM" id="CLU_028104_2_2_6"/>
<dbReference type="UniPathway" id="UPA00219"/>
<dbReference type="Proteomes" id="UP000006821">
    <property type="component" value="Chromosome"/>
</dbReference>
<dbReference type="GO" id="GO:0005737">
    <property type="term" value="C:cytoplasm"/>
    <property type="evidence" value="ECO:0007669"/>
    <property type="project" value="UniProtKB-SubCell"/>
</dbReference>
<dbReference type="GO" id="GO:0005524">
    <property type="term" value="F:ATP binding"/>
    <property type="evidence" value="ECO:0007669"/>
    <property type="project" value="UniProtKB-UniRule"/>
</dbReference>
<dbReference type="GO" id="GO:0008763">
    <property type="term" value="F:UDP-N-acetylmuramate-L-alanine ligase activity"/>
    <property type="evidence" value="ECO:0007669"/>
    <property type="project" value="UniProtKB-UniRule"/>
</dbReference>
<dbReference type="GO" id="GO:0051301">
    <property type="term" value="P:cell division"/>
    <property type="evidence" value="ECO:0007669"/>
    <property type="project" value="UniProtKB-KW"/>
</dbReference>
<dbReference type="GO" id="GO:0071555">
    <property type="term" value="P:cell wall organization"/>
    <property type="evidence" value="ECO:0007669"/>
    <property type="project" value="UniProtKB-KW"/>
</dbReference>
<dbReference type="GO" id="GO:0009252">
    <property type="term" value="P:peptidoglycan biosynthetic process"/>
    <property type="evidence" value="ECO:0007669"/>
    <property type="project" value="UniProtKB-UniRule"/>
</dbReference>
<dbReference type="GO" id="GO:0008360">
    <property type="term" value="P:regulation of cell shape"/>
    <property type="evidence" value="ECO:0007669"/>
    <property type="project" value="UniProtKB-KW"/>
</dbReference>
<dbReference type="FunFam" id="3.40.1190.10:FF:000001">
    <property type="entry name" value="UDP-N-acetylmuramate--L-alanine ligase"/>
    <property type="match status" value="1"/>
</dbReference>
<dbReference type="Gene3D" id="3.90.190.20">
    <property type="entry name" value="Mur ligase, C-terminal domain"/>
    <property type="match status" value="1"/>
</dbReference>
<dbReference type="Gene3D" id="3.40.1190.10">
    <property type="entry name" value="Mur-like, catalytic domain"/>
    <property type="match status" value="1"/>
</dbReference>
<dbReference type="Gene3D" id="3.40.50.720">
    <property type="entry name" value="NAD(P)-binding Rossmann-like Domain"/>
    <property type="match status" value="1"/>
</dbReference>
<dbReference type="HAMAP" id="MF_00046">
    <property type="entry name" value="MurC"/>
    <property type="match status" value="1"/>
</dbReference>
<dbReference type="InterPro" id="IPR036565">
    <property type="entry name" value="Mur-like_cat_sf"/>
</dbReference>
<dbReference type="InterPro" id="IPR004101">
    <property type="entry name" value="Mur_ligase_C"/>
</dbReference>
<dbReference type="InterPro" id="IPR036615">
    <property type="entry name" value="Mur_ligase_C_dom_sf"/>
</dbReference>
<dbReference type="InterPro" id="IPR013221">
    <property type="entry name" value="Mur_ligase_cen"/>
</dbReference>
<dbReference type="InterPro" id="IPR000713">
    <property type="entry name" value="Mur_ligase_N"/>
</dbReference>
<dbReference type="InterPro" id="IPR050061">
    <property type="entry name" value="MurCDEF_pg_biosynth"/>
</dbReference>
<dbReference type="InterPro" id="IPR005758">
    <property type="entry name" value="UDP-N-AcMur_Ala_ligase_MurC"/>
</dbReference>
<dbReference type="NCBIfam" id="TIGR01082">
    <property type="entry name" value="murC"/>
    <property type="match status" value="1"/>
</dbReference>
<dbReference type="PANTHER" id="PTHR43445:SF3">
    <property type="entry name" value="UDP-N-ACETYLMURAMATE--L-ALANINE LIGASE"/>
    <property type="match status" value="1"/>
</dbReference>
<dbReference type="PANTHER" id="PTHR43445">
    <property type="entry name" value="UDP-N-ACETYLMURAMATE--L-ALANINE LIGASE-RELATED"/>
    <property type="match status" value="1"/>
</dbReference>
<dbReference type="Pfam" id="PF01225">
    <property type="entry name" value="Mur_ligase"/>
    <property type="match status" value="1"/>
</dbReference>
<dbReference type="Pfam" id="PF02875">
    <property type="entry name" value="Mur_ligase_C"/>
    <property type="match status" value="1"/>
</dbReference>
<dbReference type="Pfam" id="PF08245">
    <property type="entry name" value="Mur_ligase_M"/>
    <property type="match status" value="1"/>
</dbReference>
<dbReference type="SUPFAM" id="SSF51984">
    <property type="entry name" value="MurCD N-terminal domain"/>
    <property type="match status" value="1"/>
</dbReference>
<dbReference type="SUPFAM" id="SSF53623">
    <property type="entry name" value="MurD-like peptide ligases, catalytic domain"/>
    <property type="match status" value="1"/>
</dbReference>
<dbReference type="SUPFAM" id="SSF53244">
    <property type="entry name" value="MurD-like peptide ligases, peptide-binding domain"/>
    <property type="match status" value="1"/>
</dbReference>
<name>MURC_METCA</name>
<sequence length="472" mass="50879">MTPRTEGMKKISRIHFVGVGGAGMSGIAEVLLNLGYRVSGSDLQQNANTRRLAERGAVISIGHEARHVETVDVVVVSSAVEQSNVEIDAARTARIPVISRAEMLAELMRFRYGVAVAGTHGKTTTTSLTASILAEGGLDPTFVIGGRLNSVGANAQLGQGEYLVAEADESDASFLHLQPMIAVVTNIDQDHMGTYGNDFGRLKDAFVEFLHHVPFYGAAVLCAEDPGVRDILPRLSKPYRTYGEREGVDIRAVGIQRLGLQSRFSVLRQGAEPLEITLNLPGYHNILNALAAIGVATELGVADAVIQRALAGFRGIGRRFQINACLNFGDGEITFVDDYGHHPSELAATLDSARNAWPDRRLVVVFQPHRYTRTRDLFEDFVQVLSRVDVLILLEVYSAGEAPIAGADGRSLSRAIRVRGQIDPIFAETPEEVFDILPNVLKPGDVVMTLGAGSVGVLAQQLPERLGSEAVP</sequence>
<organism>
    <name type="scientific">Methylococcus capsulatus (strain ATCC 33009 / NCIMB 11132 / Bath)</name>
    <dbReference type="NCBI Taxonomy" id="243233"/>
    <lineage>
        <taxon>Bacteria</taxon>
        <taxon>Pseudomonadati</taxon>
        <taxon>Pseudomonadota</taxon>
        <taxon>Gammaproteobacteria</taxon>
        <taxon>Methylococcales</taxon>
        <taxon>Methylococcaceae</taxon>
        <taxon>Methylococcus</taxon>
    </lineage>
</organism>
<feature type="chain" id="PRO_0000182116" description="UDP-N-acetylmuramate--L-alanine ligase">
    <location>
        <begin position="1"/>
        <end position="472"/>
    </location>
</feature>
<feature type="binding site" evidence="1">
    <location>
        <begin position="118"/>
        <end position="124"/>
    </location>
    <ligand>
        <name>ATP</name>
        <dbReference type="ChEBI" id="CHEBI:30616"/>
    </ligand>
</feature>
<keyword id="KW-0067">ATP-binding</keyword>
<keyword id="KW-0131">Cell cycle</keyword>
<keyword id="KW-0132">Cell division</keyword>
<keyword id="KW-0133">Cell shape</keyword>
<keyword id="KW-0961">Cell wall biogenesis/degradation</keyword>
<keyword id="KW-0963">Cytoplasm</keyword>
<keyword id="KW-0436">Ligase</keyword>
<keyword id="KW-0547">Nucleotide-binding</keyword>
<keyword id="KW-0573">Peptidoglycan synthesis</keyword>
<keyword id="KW-1185">Reference proteome</keyword>
<comment type="function">
    <text evidence="1">Cell wall formation.</text>
</comment>
<comment type="catalytic activity">
    <reaction evidence="1">
        <text>UDP-N-acetyl-alpha-D-muramate + L-alanine + ATP = UDP-N-acetyl-alpha-D-muramoyl-L-alanine + ADP + phosphate + H(+)</text>
        <dbReference type="Rhea" id="RHEA:23372"/>
        <dbReference type="ChEBI" id="CHEBI:15378"/>
        <dbReference type="ChEBI" id="CHEBI:30616"/>
        <dbReference type="ChEBI" id="CHEBI:43474"/>
        <dbReference type="ChEBI" id="CHEBI:57972"/>
        <dbReference type="ChEBI" id="CHEBI:70757"/>
        <dbReference type="ChEBI" id="CHEBI:83898"/>
        <dbReference type="ChEBI" id="CHEBI:456216"/>
        <dbReference type="EC" id="6.3.2.8"/>
    </reaction>
</comment>
<comment type="pathway">
    <text evidence="1">Cell wall biogenesis; peptidoglycan biosynthesis.</text>
</comment>
<comment type="subcellular location">
    <subcellularLocation>
        <location evidence="1">Cytoplasm</location>
    </subcellularLocation>
</comment>
<comment type="similarity">
    <text evidence="1">Belongs to the MurCDEF family.</text>
</comment>
<reference key="1">
    <citation type="journal article" date="2004" name="PLoS Biol.">
        <title>Genomic insights into methanotrophy: the complete genome sequence of Methylococcus capsulatus (Bath).</title>
        <authorList>
            <person name="Ward N.L."/>
            <person name="Larsen O."/>
            <person name="Sakwa J."/>
            <person name="Bruseth L."/>
            <person name="Khouri H.M."/>
            <person name="Durkin A.S."/>
            <person name="Dimitrov G."/>
            <person name="Jiang L."/>
            <person name="Scanlan D."/>
            <person name="Kang K.H."/>
            <person name="Lewis M.R."/>
            <person name="Nelson K.E."/>
            <person name="Methe B.A."/>
            <person name="Wu M."/>
            <person name="Heidelberg J.F."/>
            <person name="Paulsen I.T."/>
            <person name="Fouts D.E."/>
            <person name="Ravel J."/>
            <person name="Tettelin H."/>
            <person name="Ren Q."/>
            <person name="Read T.D."/>
            <person name="DeBoy R.T."/>
            <person name="Seshadri R."/>
            <person name="Salzberg S.L."/>
            <person name="Jensen H.B."/>
            <person name="Birkeland N.K."/>
            <person name="Nelson W.C."/>
            <person name="Dodson R.J."/>
            <person name="Grindhaug S.H."/>
            <person name="Holt I.E."/>
            <person name="Eidhammer I."/>
            <person name="Jonasen I."/>
            <person name="Vanaken S."/>
            <person name="Utterback T.R."/>
            <person name="Feldblyum T.V."/>
            <person name="Fraser C.M."/>
            <person name="Lillehaug J.R."/>
            <person name="Eisen J.A."/>
        </authorList>
    </citation>
    <scope>NUCLEOTIDE SEQUENCE [LARGE SCALE GENOMIC DNA]</scope>
    <source>
        <strain>ATCC 33009 / NCIMB 11132 / Bath</strain>
    </source>
</reference>
<proteinExistence type="inferred from homology"/>